<feature type="transit peptide" description="Chloroplast" evidence="1">
    <location>
        <begin position="1"/>
        <end position="67"/>
    </location>
</feature>
<feature type="chain" id="PRO_0000406333" description="Protein ACCUMULATION AND REPLICATION OF CHLOROPLASTS 6, chloroplastic">
    <location>
        <begin position="68"/>
        <end position="801"/>
    </location>
</feature>
<feature type="topological domain" description="Stromal" evidence="1">
    <location>
        <begin position="68"/>
        <end position="618"/>
    </location>
</feature>
<feature type="transmembrane region" description="Helical" evidence="1">
    <location>
        <begin position="619"/>
        <end position="638"/>
    </location>
</feature>
<feature type="topological domain" description="Chloroplast intermembrane" evidence="1">
    <location>
        <begin position="639"/>
        <end position="801"/>
    </location>
</feature>
<feature type="domain" description="J" evidence="2">
    <location>
        <begin position="89"/>
        <end position="153"/>
    </location>
</feature>
<feature type="region of interest" description="Interaction with PDV2" evidence="11 19 32">
    <location>
        <begin position="639"/>
        <end position="801"/>
    </location>
</feature>
<feature type="mutagenesis site" description="Reduced interaction with PDV2 leading to altered chloroplast division and formation of dumbbell-shaped plastids." evidence="19">
    <original>W</original>
    <variation>A</variation>
    <location>
        <position position="686"/>
    </location>
</feature>
<feature type="mutagenesis site" description="Reduced interaction with PDV2 leading to altered chloroplast division and formation of dumbbell-shaped plastids." evidence="19">
    <original>R</original>
    <variation>A</variation>
    <variation>D</variation>
    <location>
        <position position="776"/>
    </location>
</feature>
<feature type="mutagenesis site" description="Reduced interaction with PDV2 leading to altered chloroplast division and formation of dumbbell-shaped plastids." evidence="19">
    <original>Y</original>
    <variation>A</variation>
    <location>
        <position position="778"/>
    </location>
</feature>
<feature type="sequence conflict" description="In Ref. 1; AAQ18644/AAQ18645/AAQ18646." evidence="29" ref="1">
    <original>P</original>
    <variation>L</variation>
    <location>
        <position position="73"/>
    </location>
</feature>
<feature type="sequence conflict" description="In Ref. 1; AAQ18646." evidence="29" ref="1">
    <original>E</original>
    <variation>G</variation>
    <location>
        <position position="158"/>
    </location>
</feature>
<feature type="sequence conflict" description="In Ref. 1; AAQ18645/AAQ18646." evidence="29" ref="1">
    <original>A</original>
    <variation>T</variation>
    <location>
        <position position="513"/>
    </location>
</feature>
<feature type="sequence conflict" description="In Ref. 1; AAQ18646." evidence="29" ref="1">
    <original>D</original>
    <variation>E</variation>
    <location>
        <position position="610"/>
    </location>
</feature>
<feature type="helix" evidence="33">
    <location>
        <begin position="676"/>
        <end position="694"/>
    </location>
</feature>
<feature type="helix" evidence="33">
    <location>
        <begin position="700"/>
        <end position="705"/>
    </location>
</feature>
<feature type="helix" evidence="33">
    <location>
        <begin position="709"/>
        <end position="725"/>
    </location>
</feature>
<feature type="strand" evidence="33">
    <location>
        <begin position="727"/>
        <end position="743"/>
    </location>
</feature>
<feature type="strand" evidence="33">
    <location>
        <begin position="747"/>
        <end position="766"/>
    </location>
</feature>
<feature type="helix" evidence="33">
    <location>
        <begin position="768"/>
        <end position="770"/>
    </location>
</feature>
<feature type="strand" evidence="33">
    <location>
        <begin position="772"/>
        <end position="787"/>
    </location>
</feature>
<feature type="strand" evidence="33">
    <location>
        <begin position="790"/>
        <end position="798"/>
    </location>
</feature>
<evidence type="ECO:0000255" key="1"/>
<evidence type="ECO:0000255" key="2">
    <source>
        <dbReference type="PROSITE-ProRule" id="PRU00286"/>
    </source>
</evidence>
<evidence type="ECO:0000269" key="3">
    <source>
    </source>
</evidence>
<evidence type="ECO:0000269" key="4">
    <source>
    </source>
</evidence>
<evidence type="ECO:0000269" key="5">
    <source>
    </source>
</evidence>
<evidence type="ECO:0000269" key="6">
    <source>
    </source>
</evidence>
<evidence type="ECO:0000269" key="7">
    <source>
    </source>
</evidence>
<evidence type="ECO:0000269" key="8">
    <source>
    </source>
</evidence>
<evidence type="ECO:0000269" key="9">
    <source>
    </source>
</evidence>
<evidence type="ECO:0000269" key="10">
    <source>
    </source>
</evidence>
<evidence type="ECO:0000269" key="11">
    <source>
    </source>
</evidence>
<evidence type="ECO:0000269" key="12">
    <source>
    </source>
</evidence>
<evidence type="ECO:0000269" key="13">
    <source>
    </source>
</evidence>
<evidence type="ECO:0000269" key="14">
    <source>
    </source>
</evidence>
<evidence type="ECO:0000269" key="15">
    <source>
    </source>
</evidence>
<evidence type="ECO:0000269" key="16">
    <source>
    </source>
</evidence>
<evidence type="ECO:0000269" key="17">
    <source>
    </source>
</evidence>
<evidence type="ECO:0000269" key="18">
    <source>
    </source>
</evidence>
<evidence type="ECO:0000269" key="19">
    <source>
    </source>
</evidence>
<evidence type="ECO:0000269" key="20">
    <source>
    </source>
</evidence>
<evidence type="ECO:0000269" key="21">
    <source>
    </source>
</evidence>
<evidence type="ECO:0000269" key="22">
    <source>
    </source>
</evidence>
<evidence type="ECO:0000269" key="23">
    <source>
    </source>
</evidence>
<evidence type="ECO:0000269" key="24">
    <source>
    </source>
</evidence>
<evidence type="ECO:0000269" key="25">
    <source>
    </source>
</evidence>
<evidence type="ECO:0000269" key="26">
    <source>
    </source>
</evidence>
<evidence type="ECO:0000303" key="27">
    <source>
    </source>
</evidence>
<evidence type="ECO:0000303" key="28">
    <source>
    </source>
</evidence>
<evidence type="ECO:0000305" key="29"/>
<evidence type="ECO:0000312" key="30">
    <source>
        <dbReference type="Araport" id="AT5G42480"/>
    </source>
</evidence>
<evidence type="ECO:0000312" key="31">
    <source>
        <dbReference type="EMBL" id="BAB10489.1"/>
    </source>
</evidence>
<evidence type="ECO:0007744" key="32">
    <source>
        <dbReference type="PDB" id="5GTB"/>
    </source>
</evidence>
<evidence type="ECO:0007829" key="33">
    <source>
        <dbReference type="PDB" id="5D9R"/>
    </source>
</evidence>
<proteinExistence type="evidence at protein level"/>
<keyword id="KW-0002">3D-structure</keyword>
<keyword id="KW-0150">Chloroplast</keyword>
<keyword id="KW-0472">Membrane</keyword>
<keyword id="KW-0934">Plastid</keyword>
<keyword id="KW-1001">Plastid inner membrane</keyword>
<keyword id="KW-1185">Reference proteome</keyword>
<keyword id="KW-0809">Transit peptide</keyword>
<keyword id="KW-0812">Transmembrane</keyword>
<keyword id="KW-1133">Transmembrane helix</keyword>
<sequence>MEALSHVGIGLSPFQLCRLPPATTKLRRSHNTSTTICSASKWADRLLSDFNFTSDSSSSSFATATTTATLVSPPPSIDRPERHVPIPIDFYQVLGAQTHFLTDGIRRAFEARVSKPPQFGFSDDALISRRQILQAACETLSNPRSRREYNEGLLDDEEATVITDVPWDKVPGALCVLQEGGETEIVLRVGEALLKERLPKSFKQDVVLVMALAFLDVSRDAMALDPPDFITGYEFVEEALKLLQEEGASSLAPDLRAQIDETLEEITPRYVLELLGLPLGDDYAAKRLNGLSGVRNILWSVGGGGASALVGGLTREKFMNEAFLRMTAAEQVDLFVATPSNIPAESFEVYEVALALVAQAFIGKKPHLLQDADKQFQQLQQAKVMAMEIPAMLYDTRNNWEIDFGLERGLCALLIGKVDECRMWLGLDSEDSQYRNPAIVEFVLENSNRDDNDDLPGLCKLLETWLAGVVFPRFRDTKDKKFKLGDYYDDPMVLSYLERVEVVQGSPLAAAAAMARIGAEHVKASAMQALQKVFPSRYTDRNSAEPKDVQETVFSVDPVGNNVGRDGEPGVFIAEAVRPSENFETNDYAIRAGVSESSVDETTVEMSVADMLKEASVKILAAGVAIGLISLFSQKYFLKSSSSFQRKDMVSSMESDVATIGSVRADDSEALPRMDARTAENIVSKWQKIKSLAFGPDHRIEMLPEVLDGRMLKIWTDRAAETAQLGLVYDYTLLKLSVDSVTVSADGTRALVEATLEESACLSDLVHPENNATDVRTYTTRYEVFWSKSGWKITEGSVLAS</sequence>
<dbReference type="EMBL" id="AY221467">
    <property type="protein sequence ID" value="AAQ18644.1"/>
    <property type="molecule type" value="Genomic_DNA"/>
</dbReference>
<dbReference type="EMBL" id="AY221468">
    <property type="protein sequence ID" value="AAQ18645.1"/>
    <property type="molecule type" value="Genomic_DNA"/>
</dbReference>
<dbReference type="EMBL" id="AY221469">
    <property type="protein sequence ID" value="AAQ18646.1"/>
    <property type="molecule type" value="mRNA"/>
</dbReference>
<dbReference type="EMBL" id="AB016888">
    <property type="protein sequence ID" value="BAB10489.1"/>
    <property type="molecule type" value="Genomic_DNA"/>
</dbReference>
<dbReference type="EMBL" id="CP002688">
    <property type="protein sequence ID" value="AED94815.1"/>
    <property type="molecule type" value="Genomic_DNA"/>
</dbReference>
<dbReference type="EMBL" id="AY091075">
    <property type="protein sequence ID" value="AAM13895.1"/>
    <property type="molecule type" value="mRNA"/>
</dbReference>
<dbReference type="EMBL" id="AY150490">
    <property type="protein sequence ID" value="AAN12907.1"/>
    <property type="molecule type" value="mRNA"/>
</dbReference>
<dbReference type="RefSeq" id="NP_199063.1">
    <property type="nucleotide sequence ID" value="NM_123613.4"/>
</dbReference>
<dbReference type="PDB" id="5D9R">
    <property type="method" value="X-ray"/>
    <property type="resolution" value="2.05 A"/>
    <property type="chains" value="A=636-801"/>
</dbReference>
<dbReference type="PDB" id="5GTB">
    <property type="method" value="X-ray"/>
    <property type="resolution" value="2.87 A"/>
    <property type="chains" value="A=646-801"/>
</dbReference>
<dbReference type="PDB" id="5HAD">
    <property type="method" value="X-ray"/>
    <property type="resolution" value="2.24 A"/>
    <property type="chains" value="A=646-801"/>
</dbReference>
<dbReference type="PDBsum" id="5D9R"/>
<dbReference type="PDBsum" id="5GTB"/>
<dbReference type="PDBsum" id="5HAD"/>
<dbReference type="SMR" id="Q9FIG9"/>
<dbReference type="BioGRID" id="19505">
    <property type="interactions" value="4"/>
</dbReference>
<dbReference type="FunCoup" id="Q9FIG9">
    <property type="interactions" value="1294"/>
</dbReference>
<dbReference type="IntAct" id="Q9FIG9">
    <property type="interactions" value="5"/>
</dbReference>
<dbReference type="STRING" id="3702.Q9FIG9"/>
<dbReference type="iPTMnet" id="Q9FIG9"/>
<dbReference type="PaxDb" id="3702-AT5G42480.1"/>
<dbReference type="ProteomicsDB" id="240611"/>
<dbReference type="EnsemblPlants" id="AT5G42480.1">
    <property type="protein sequence ID" value="AT5G42480.1"/>
    <property type="gene ID" value="AT5G42480"/>
</dbReference>
<dbReference type="GeneID" id="834255"/>
<dbReference type="Gramene" id="AT5G42480.1">
    <property type="protein sequence ID" value="AT5G42480.1"/>
    <property type="gene ID" value="AT5G42480"/>
</dbReference>
<dbReference type="KEGG" id="ath:AT5G42480"/>
<dbReference type="Araport" id="AT5G42480"/>
<dbReference type="TAIR" id="AT5G42480">
    <property type="gene designation" value="ARC6"/>
</dbReference>
<dbReference type="eggNOG" id="ENOG502QQSA">
    <property type="taxonomic scope" value="Eukaryota"/>
</dbReference>
<dbReference type="HOGENOM" id="CLU_013174_0_0_1"/>
<dbReference type="InParanoid" id="Q9FIG9"/>
<dbReference type="OMA" id="NILWTVG"/>
<dbReference type="PhylomeDB" id="Q9FIG9"/>
<dbReference type="EvolutionaryTrace" id="Q9FIG9"/>
<dbReference type="PRO" id="PR:Q9FIG9"/>
<dbReference type="Proteomes" id="UP000006548">
    <property type="component" value="Chromosome 5"/>
</dbReference>
<dbReference type="ExpressionAtlas" id="Q9FIG9">
    <property type="expression patterns" value="baseline and differential"/>
</dbReference>
<dbReference type="GO" id="GO:0009507">
    <property type="term" value="C:chloroplast"/>
    <property type="evidence" value="ECO:0000314"/>
    <property type="project" value="UniProtKB"/>
</dbReference>
<dbReference type="GO" id="GO:0009941">
    <property type="term" value="C:chloroplast envelope"/>
    <property type="evidence" value="ECO:0007005"/>
    <property type="project" value="TAIR"/>
</dbReference>
<dbReference type="GO" id="GO:0009706">
    <property type="term" value="C:chloroplast inner membrane"/>
    <property type="evidence" value="ECO:0000314"/>
    <property type="project" value="UniProtKB"/>
</dbReference>
<dbReference type="GO" id="GO:0009536">
    <property type="term" value="C:plastid"/>
    <property type="evidence" value="ECO:0007005"/>
    <property type="project" value="TAIR"/>
</dbReference>
<dbReference type="GO" id="GO:0042803">
    <property type="term" value="F:protein homodimerization activity"/>
    <property type="evidence" value="ECO:0000314"/>
    <property type="project" value="UniProtKB"/>
</dbReference>
<dbReference type="GO" id="GO:0010020">
    <property type="term" value="P:chloroplast fission"/>
    <property type="evidence" value="ECO:0000315"/>
    <property type="project" value="UniProtKB"/>
</dbReference>
<dbReference type="GO" id="GO:0009658">
    <property type="term" value="P:chloroplast organization"/>
    <property type="evidence" value="ECO:0000315"/>
    <property type="project" value="TAIR"/>
</dbReference>
<dbReference type="GO" id="GO:0009739">
    <property type="term" value="P:response to gibberellin"/>
    <property type="evidence" value="ECO:0000270"/>
    <property type="project" value="UniProtKB"/>
</dbReference>
<dbReference type="InterPro" id="IPR044685">
    <property type="entry name" value="ARC6-like"/>
</dbReference>
<dbReference type="InterPro" id="IPR025344">
    <property type="entry name" value="ARC6-like_IMS"/>
</dbReference>
<dbReference type="InterPro" id="IPR036869">
    <property type="entry name" value="J_dom_sf"/>
</dbReference>
<dbReference type="PANTHER" id="PTHR33925">
    <property type="entry name" value="PLASTID DIVISION PROTEIN CDP1, CHLOROPLASTIC-RELATED"/>
    <property type="match status" value="1"/>
</dbReference>
<dbReference type="PANTHER" id="PTHR33925:SF1">
    <property type="entry name" value="PROTEIN ACCUMULATION AND REPLICATION OF CHLOROPLASTS 6, CHLOROPLASTIC"/>
    <property type="match status" value="1"/>
</dbReference>
<dbReference type="Pfam" id="PF23468">
    <property type="entry name" value="ARC6"/>
    <property type="match status" value="1"/>
</dbReference>
<dbReference type="Pfam" id="PF13355">
    <property type="entry name" value="ARC6-like_IMS"/>
    <property type="match status" value="1"/>
</dbReference>
<dbReference type="SUPFAM" id="SSF46565">
    <property type="entry name" value="Chaperone J-domain"/>
    <property type="match status" value="1"/>
</dbReference>
<reference key="1">
    <citation type="journal article" date="2003" name="Plant Cell">
        <title>ARC6 is a J-domain plastid division protein and an evolutionary descendant of the cyanobacterial cell division protein Ftn2.</title>
        <authorList>
            <person name="Vitha S."/>
            <person name="Froehlich J.E."/>
            <person name="Koksharova O."/>
            <person name="Pyke K.A."/>
            <person name="van Erp H."/>
            <person name="Osteryoung K.W."/>
        </authorList>
    </citation>
    <scope>NUCLEOTIDE SEQUENCE [GENOMIC DNA / MRNA]</scope>
    <scope>FUNCTION</scope>
    <scope>DISRUPTION PHENOTYPE</scope>
    <scope>SUBCELLULAR LOCATION</scope>
    <scope>TOPOLOGY</scope>
    <source>
        <strain>cv. Columbia</strain>
        <strain>cv. Wassilewskija</strain>
        <strain>cv. Wassilewskija-2</strain>
    </source>
</reference>
<reference key="2">
    <citation type="journal article" date="1998" name="DNA Res.">
        <title>Structural analysis of Arabidopsis thaliana chromosome 5. VIII. Sequence features of the regions of 1,081,958 bp covered by seventeen physically assigned P1 and TAC clones.</title>
        <authorList>
            <person name="Asamizu E."/>
            <person name="Sato S."/>
            <person name="Kaneko T."/>
            <person name="Nakamura Y."/>
            <person name="Kotani H."/>
            <person name="Miyajima N."/>
            <person name="Tabata S."/>
        </authorList>
    </citation>
    <scope>NUCLEOTIDE SEQUENCE [LARGE SCALE GENOMIC DNA]</scope>
    <source>
        <strain>cv. Columbia</strain>
    </source>
</reference>
<reference key="3">
    <citation type="journal article" date="2017" name="Plant J.">
        <title>Araport11: a complete reannotation of the Arabidopsis thaliana reference genome.</title>
        <authorList>
            <person name="Cheng C.Y."/>
            <person name="Krishnakumar V."/>
            <person name="Chan A.P."/>
            <person name="Thibaud-Nissen F."/>
            <person name="Schobel S."/>
            <person name="Town C.D."/>
        </authorList>
    </citation>
    <scope>GENOME REANNOTATION</scope>
    <source>
        <strain>cv. Columbia</strain>
    </source>
</reference>
<reference key="4">
    <citation type="journal article" date="2003" name="Science">
        <title>Empirical analysis of transcriptional activity in the Arabidopsis genome.</title>
        <authorList>
            <person name="Yamada K."/>
            <person name="Lim J."/>
            <person name="Dale J.M."/>
            <person name="Chen H."/>
            <person name="Shinn P."/>
            <person name="Palm C.J."/>
            <person name="Southwick A.M."/>
            <person name="Wu H.C."/>
            <person name="Kim C.J."/>
            <person name="Nguyen M."/>
            <person name="Pham P.K."/>
            <person name="Cheuk R.F."/>
            <person name="Karlin-Newmann G."/>
            <person name="Liu S.X."/>
            <person name="Lam B."/>
            <person name="Sakano H."/>
            <person name="Wu T."/>
            <person name="Yu G."/>
            <person name="Miranda M."/>
            <person name="Quach H.L."/>
            <person name="Tripp M."/>
            <person name="Chang C.H."/>
            <person name="Lee J.M."/>
            <person name="Toriumi M.J."/>
            <person name="Chan M.M."/>
            <person name="Tang C.C."/>
            <person name="Onodera C.S."/>
            <person name="Deng J.M."/>
            <person name="Akiyama K."/>
            <person name="Ansari Y."/>
            <person name="Arakawa T."/>
            <person name="Banh J."/>
            <person name="Banno F."/>
            <person name="Bowser L."/>
            <person name="Brooks S.Y."/>
            <person name="Carninci P."/>
            <person name="Chao Q."/>
            <person name="Choy N."/>
            <person name="Enju A."/>
            <person name="Goldsmith A.D."/>
            <person name="Gurjal M."/>
            <person name="Hansen N.F."/>
            <person name="Hayashizaki Y."/>
            <person name="Johnson-Hopson C."/>
            <person name="Hsuan V.W."/>
            <person name="Iida K."/>
            <person name="Karnes M."/>
            <person name="Khan S."/>
            <person name="Koesema E."/>
            <person name="Ishida J."/>
            <person name="Jiang P.X."/>
            <person name="Jones T."/>
            <person name="Kawai J."/>
            <person name="Kamiya A."/>
            <person name="Meyers C."/>
            <person name="Nakajima M."/>
            <person name="Narusaka M."/>
            <person name="Seki M."/>
            <person name="Sakurai T."/>
            <person name="Satou M."/>
            <person name="Tamse R."/>
            <person name="Vaysberg M."/>
            <person name="Wallender E.K."/>
            <person name="Wong C."/>
            <person name="Yamamura Y."/>
            <person name="Yuan S."/>
            <person name="Shinozaki K."/>
            <person name="Davis R.W."/>
            <person name="Theologis A."/>
            <person name="Ecker J.R."/>
        </authorList>
    </citation>
    <scope>NUCLEOTIDE SEQUENCE [LARGE SCALE MRNA]</scope>
    <source>
        <strain>cv. Columbia</strain>
    </source>
</reference>
<reference key="5">
    <citation type="journal article" date="1994" name="Plant Physiol.">
        <title>arc6, a fertile Arabidopsis mutant with only two mesophyll cell chloroplasts.</title>
        <authorList>
            <person name="Pyke K.A."/>
            <person name="Rutherford S.M."/>
            <person name="Robertson E.J."/>
            <person name="Leech R.M."/>
        </authorList>
    </citation>
    <scope>FUNCTION</scope>
    <scope>DISRUPTION PHENOTYPE</scope>
    <source>
        <strain>cv. Wassilewskija</strain>
    </source>
</reference>
<reference key="6">
    <citation type="journal article" date="1995" name="J. Cell Sci.">
        <title>arc6, an extreme chloroplast division mutant of Arabidopsis also alters proplastid proliferation and morphology in shoot and root apices.</title>
        <authorList>
            <person name="Robertson E.J."/>
            <person name="Pyke K.A."/>
            <person name="Leech R.M."/>
        </authorList>
    </citation>
    <scope>FUNCTION</scope>
    <scope>DISRUPTION PHENOTYPE</scope>
    <source>
        <strain>cv. Wassilewskija</strain>
    </source>
</reference>
<reference key="7">
    <citation type="journal article" date="1998" name="Plant Physiol.">
        <title>Plastid ontogeny during petal development in Arabidopsis.</title>
        <authorList>
            <person name="Pyke K.A."/>
            <person name="Page A.M."/>
        </authorList>
    </citation>
    <scope>FUNCTION</scope>
    <scope>DISRUPTION PHENOTYPE</scope>
    <source>
        <strain>cv. Landsberg erecta</strain>
    </source>
</reference>
<reference key="8">
    <citation type="journal article" date="1999" name="Plant J.">
        <title>The distinctive roles of five different ARC genes in the chloroplast division process in Arabidopsis.</title>
        <authorList>
            <person name="Marrison J.L."/>
            <person name="Rutherford S.M."/>
            <person name="Robertson E.J."/>
            <person name="Lister C."/>
            <person name="Dean C."/>
            <person name="Leech R.M."/>
        </authorList>
    </citation>
    <scope>FUNCTION</scope>
    <scope>DISRUPTION PHENOTYPE</scope>
</reference>
<reference key="9">
    <citation type="journal article" date="2002" name="Physiol. Plantarum">
        <title>Reduced gravitropism in inflorescence stems and hypocotyls, but not roots, of Arabidopsis mutants with large plastids.</title>
        <authorList>
            <person name="Yamamoto K."/>
            <person name="Pyke K.A."/>
            <person name="Kiss J.Z."/>
        </authorList>
    </citation>
    <scope>FUNCTION</scope>
    <scope>DISRUPTION PHENOTYPE</scope>
</reference>
<reference key="10">
    <citation type="journal article" date="2005" name="Plant J.">
        <title>Plastid division is mediated by combinatorial assembly of plastid division proteins.</title>
        <authorList>
            <person name="Maple J."/>
            <person name="Aldridge C."/>
            <person name="Moeller S.G."/>
        </authorList>
    </citation>
    <scope>INTERACTION WITH FTSZ2-1</scope>
    <scope>SELF-INTERACTION</scope>
</reference>
<reference key="11">
    <citation type="journal article" date="2005" name="Proc. Natl. Acad. Sci. U.S.A.">
        <title>Cell and plastid division are coordinated through the prereplication factor AtCDT1.</title>
        <authorList>
            <person name="Raynaud C."/>
            <person name="Perennes C."/>
            <person name="Reuzeau C."/>
            <person name="Catrice O."/>
            <person name="Brown S."/>
            <person name="Bergounioux C."/>
        </authorList>
    </citation>
    <scope>INTERACTION WITH CDT1A</scope>
    <scope>SUBCELLULAR LOCATION</scope>
</reference>
<reference key="12">
    <citation type="journal article" date="2008" name="Biochem. J.">
        <title>In vivo quantitative relationship between plastid division proteins FtsZ1 and FtsZ2 and identification of ARC6 and ARC3 in a native FtsZ complex.</title>
        <authorList>
            <person name="McAndrew R.S."/>
            <person name="Olson B.J."/>
            <person name="Kadirjan-Kalbach D.K."/>
            <person name="Chi-Ham C.L."/>
            <person name="Vitha S."/>
            <person name="Froehlich J.E."/>
            <person name="Osteryoung K.W."/>
        </authorList>
    </citation>
    <scope>SUBUNIT</scope>
    <source>
        <strain>cv. Columbia</strain>
    </source>
</reference>
<reference key="13">
    <citation type="journal article" date="2008" name="Photochem. Photobiol.">
        <title>Effects of arc3, arc5 and arc6 mutations on plastid morphology and stromule formation in green and nongreen tissues of Arabidopsis thaliana.</title>
        <authorList>
            <person name="Holzinger A."/>
            <person name="Kwok E.Y."/>
            <person name="Hanson M.R."/>
        </authorList>
    </citation>
    <scope>FUNCTION</scope>
    <scope>DISRUPTION PHENOTYPE</scope>
    <source>
        <strain>cv. Columbia</strain>
        <strain>cv. Wassilewskija</strain>
    </source>
</reference>
<reference key="14">
    <citation type="journal article" date="2008" name="Plant Cell">
        <title>Arabidopsis ARC6 coordinates the division machineries of the inner and outer chloroplast membranes through interaction with PDV2 in the intermembrane space.</title>
        <authorList>
            <person name="Glynn J.M."/>
            <person name="Froehlich J.E."/>
            <person name="Osteryoung K.W."/>
        </authorList>
    </citation>
    <scope>FUNCTION</scope>
    <scope>INTERACTION WITH PDV2</scope>
    <scope>SUBCELLULAR LOCATION</scope>
    <scope>TOPOLOGY</scope>
    <source>
        <strain>cv. Columbia</strain>
    </source>
</reference>
<reference key="15">
    <citation type="journal article" date="2009" name="Mol. Plant">
        <title>Arabidopsis FtsZ2-1 and FtsZ2-2 are functionally redundant, but FtsZ-based plastid division is not essential for chloroplast partitioning or plant growth and development.</title>
        <authorList>
            <person name="Schmitz A.J."/>
            <person name="Glynn J.M."/>
            <person name="Olson B.J.S.C."/>
            <person name="Stokes K.D."/>
            <person name="Osteryoung K.W."/>
        </authorList>
    </citation>
    <scope>INTERACTION WITH FTSZ2-1 AND FTSZ2-2</scope>
</reference>
<reference key="16">
    <citation type="journal article" date="2009" name="Plant Cell Physiol.">
        <title>Plant cells without detectable plastids are generated in the crumpled leaf mutant of Arabidopsis thaliana.</title>
        <authorList>
            <person name="Chen Y."/>
            <person name="Asano T."/>
            <person name="Fujiwara M.T."/>
            <person name="Yoshida S."/>
            <person name="Machida Y."/>
            <person name="Yoshioka Y."/>
        </authorList>
    </citation>
    <scope>DISRUPTION PHENOTYPE</scope>
</reference>
<reference key="17">
    <citation type="journal article" date="2011" name="PLoS ONE">
        <title>A J-like protein influences fatty acid composition of chloroplast lipids in Arabidopsis.</title>
        <authorList>
            <person name="Ajjawi I."/>
            <person name="Coku A."/>
            <person name="Froehlich J.E."/>
            <person name="Yang Y."/>
            <person name="Osteryoung K.W."/>
            <person name="Benning C."/>
            <person name="Last R.L."/>
        </authorList>
    </citation>
    <scope>FUNCTION</scope>
    <scope>DISRUPTION PHENOTYPE</scope>
    <scope>INTERACTION WITH CJD1</scope>
    <source>
        <strain>cv. Columbia</strain>
    </source>
</reference>
<reference key="18">
    <citation type="journal article" date="2012" name="Biochem. J.">
        <title>In vivo phosphorylation of FtsZ2 in Arabidopsis thaliana.</title>
        <authorList>
            <person name="Gargano D."/>
            <person name="Maple-Groedem J."/>
            <person name="Moeller S.G."/>
        </authorList>
    </citation>
    <scope>INTERACTION WITH FTSZ1-1; FTSZ2-1 AND FTSZ2-2</scope>
</reference>
<reference key="19">
    <citation type="journal article" date="2012" name="Plant J.">
        <title>Gibberellin indirectly promotes chloroplast biogenesis as a means to maintain the chloroplast population of expanded cells.</title>
        <authorList>
            <person name="Jiang X."/>
            <person name="Li H."/>
            <person name="Wang T."/>
            <person name="Peng C."/>
            <person name="Wang H."/>
            <person name="Wu H."/>
            <person name="Wang X."/>
        </authorList>
    </citation>
    <scope>INDUCTION BY GIBBERELLIC ACID</scope>
</reference>
<reference key="20">
    <citation type="journal article" date="2016" name="Plant Physiol.">
        <title>Roles of Arabidopsis PARC6 in Coordination of the Chloroplast Division Complex and Negative Regulation of FtsZ Assembly.</title>
        <authorList>
            <person name="Zhang M."/>
            <person name="Chen C."/>
            <person name="Froehlich J.E."/>
            <person name="TerBush A.D."/>
            <person name="Osteryoung K.W."/>
        </authorList>
    </citation>
    <scope>INTERACTION WITH FTSZ2-1</scope>
    <source>
        <strain>cv. Columbia</strain>
    </source>
</reference>
<reference key="21">
    <citation type="journal article" date="2017" name="Plant Cell Rep.">
        <title>PDV2 has a dosage effect on chloroplast division in Arabidopsis.</title>
        <authorList>
            <person name="Chang N."/>
            <person name="Sun Q."/>
            <person name="Li Y."/>
            <person name="Mu Y."/>
            <person name="Hu J."/>
            <person name="Feng Y."/>
            <person name="Liu X."/>
            <person name="Gao H."/>
        </authorList>
    </citation>
    <scope>TISSUE SPECIFICITY</scope>
    <scope>DEVELOPMENTAL STAGE</scope>
    <source>
        <strain>cv. Columbia</strain>
        <strain>cv. Landsberg erecta</strain>
    </source>
</reference>
<reference key="22">
    <citation type="journal article" date="2018" name="Biochem. J.">
        <title>Chloroplast division protein ARC3 acts on FtsZ2 by preventing filament bundling and enhancing GTPase activity.</title>
        <authorList>
            <person name="Shaik R.S."/>
            <person name="Sung M.W."/>
            <person name="Vitha S."/>
            <person name="Holzenburg A."/>
        </authorList>
    </citation>
    <scope>SUBUNIT</scope>
    <scope>INTERACTION WITH ARC3 AND FTSZ2-1</scope>
    <scope>FUNCTION</scope>
</reference>
<reference key="23">
    <citation type="journal article" date="2018" name="J. Biol. Chem.">
        <title>The chloroplast division protein ARC6 acts to inhibit disassembly of GDP-bound FtsZ2.</title>
        <authorList>
            <person name="Sung M.W."/>
            <person name="Shaik R."/>
            <person name="TerBush A.D."/>
            <person name="Osteryoung K.W."/>
            <person name="Vitha S."/>
            <person name="Holzenburg A."/>
        </authorList>
    </citation>
    <scope>FUNCTION</scope>
    <scope>HOMODIMER</scope>
    <scope>INTERACTION WITH FTSZ2-1</scope>
</reference>
<reference key="24">
    <citation type="journal article" date="2018" name="Plant Cell">
        <title>MCD1 associates with FtsZ filaments via the membrane-tethering protein ARC6 to guide chloroplast division.</title>
        <authorList>
            <person name="Chen L."/>
            <person name="Sun B."/>
            <person name="Gao W."/>
            <person name="Zhang Q.Y."/>
            <person name="Yuan H."/>
            <person name="Zhang M."/>
        </authorList>
    </citation>
    <scope>FUNCTION</scope>
    <scope>DISRUPTION PHENOTYPE</scope>
    <scope>INTERACTION WITH MCD1 AND FTSZ2-1</scope>
    <source>
        <strain>cv. Columbia</strain>
    </source>
</reference>
<reference key="25">
    <citation type="journal article" date="2018" name="Plant Signal. Behav.">
        <title>Moonlighting proteins: putting the spotlight on enzymes.</title>
        <authorList>
            <person name="Abolhassani Rad S."/>
            <person name="Clayton E.J."/>
            <person name="Cornelius E.J."/>
            <person name="Howes T.R."/>
            <person name="Kohalmi S.E."/>
        </authorList>
    </citation>
    <scope>DISRUPTION PHENOTYPE</scope>
    <source>
        <strain>cv. Columbia</strain>
    </source>
</reference>
<reference key="26">
    <citation type="journal article" date="2018" name="PLoS ONE">
        <title>The Arabidopsis arc5 and arc6 mutations differentially affect plastid morphology in pavement and guard cells in the leaf epidermis.</title>
        <authorList>
            <person name="Fujiwara M.T."/>
            <person name="Yasuzawa M."/>
            <person name="Kojo K.H."/>
            <person name="Niwa Y."/>
            <person name="Abe T."/>
            <person name="Yoshida S."/>
            <person name="Nakano T."/>
            <person name="Itoh R.D."/>
        </authorList>
    </citation>
    <scope>FUNCTION</scope>
    <scope>DISRUPTION PHENOTYPE</scope>
    <source>
        <strain>cv. Columbia</strain>
        <strain>cv. Landsberg erecta</strain>
        <strain>cv. Wassilewskija</strain>
    </source>
</reference>
<reference key="27">
    <citation type="journal article" date="2016" name="Protein Sci.">
        <title>Crystal structure of a conserved domain in the intermembrane space region of the plastid division protein ARC6.</title>
        <authorList>
            <person name="Kumar N."/>
            <person name="Radhakrishnan A."/>
            <person name="Su C.-C."/>
            <person name="Osteryoung K.W."/>
            <person name="Yu E.W."/>
        </authorList>
    </citation>
    <scope>X-RAY CRYSTALLOGRAPHY (2.05 ANGSTROMS) OF 636-801</scope>
</reference>
<reference key="28">
    <citation type="journal article" date="2017" name="Nat. Plants">
        <title>Structural insights into the coordination of plastid division by the ARC6-PDV2 complex.</title>
        <authorList>
            <person name="Wang W."/>
            <person name="Li J."/>
            <person name="Sun Q."/>
            <person name="Yu X."/>
            <person name="Zhang W."/>
            <person name="Jia N."/>
            <person name="An C."/>
            <person name="Li Y."/>
            <person name="Dong Y."/>
            <person name="Han F."/>
            <person name="Chang N."/>
            <person name="Liu X."/>
            <person name="Zhu Z."/>
            <person name="Yu Y."/>
            <person name="Fan S."/>
            <person name="Yang M."/>
            <person name="Luo S.-Z."/>
            <person name="Gao H."/>
            <person name="Feng Y."/>
        </authorList>
    </citation>
    <scope>X-RAY CRYSTALLOGRAPHY (2.24 ANGSTROMS) OF 646-801 IN COMPLEX WITH PDV2</scope>
    <scope>FUNCTION</scope>
    <scope>DIMERIZATION</scope>
    <scope>INTERACTION WITH PDV2</scope>
    <scope>MUTAGENESIS OF TRP-686; ARG-776 AND TYR-778</scope>
    <scope>SUBCELLULAR LOCATION</scope>
</reference>
<gene>
    <name evidence="27" type="primary">ARC6</name>
    <name evidence="30" type="ordered locus">At5g42480</name>
    <name evidence="31" type="ORF">MDH9.18</name>
</gene>
<protein>
    <recommendedName>
        <fullName evidence="27">Protein ACCUMULATION AND REPLICATION OF CHLOROPLASTS 6, chloroplastic</fullName>
        <shortName evidence="28">AtARC6</shortName>
    </recommendedName>
</protein>
<comment type="function">
    <text evidence="3 4 5 6 10 11 19 20 21 22 23 25 26">Component of the plastid division machinery consisting in a binary fission accomplished by the simultaneous constriction of the FtsZ ring on the stromal side of the inner envelope membrane, and the ARC5 ring on the cytosolic side of the outer envelope membrane (PubMed:28248291, PubMed:29466386). Involved in the initiation of proplastid and plastid division (including chloroplasts, statoliths and leukoplasts) (PubMed:29466386). Promotes the assembly and/or stabilization of the plastid-dividing FtsZ ring, functioning as an antagonistic regulator of FtsZ dynamics against CDP1 and facilitating MCD1 positioning to membrane tethered FtsZ filaments to form the chloroplast Z-Ring; inhibits GDP-induced disassembly of FTSZ2 but enables ARC3 binding to FTSZ2-1 (PubMed:29138260, PubMed:29466386, PubMed:29769312, PubMed:29967285). Relays plastid division site position between stroma and outer surface via interactions with the stromal FtsZ ring and the outer membrane PDV2 that recruits cytoplasmic ARC5 ring (PubMed:28248291). Required for plastid equatorial positioning of PDV2 and ARC5. May contribute to gravitropism in stems and hypocotyls. Seems to influence stromule (stroma-filled tubular extensions of the plastid envelope membrane) length and frequency.</text>
</comment>
<comment type="subunit">
    <text evidence="7 8 9 11 13 14 15 17 19 20 22 23">Self-interacts (PubMed:28248291, PubMed:29769312). Part of a complex made of ARC3, ARC6, FTSZ1 and FTSZ2 (PubMed:22823492). Interacts with FTSZ2-1 and FTSZ2-2 (via C-terminus), but not with FTSZ1; this interaction enables ARC3 binding to FTSZ2 (PubMed:26527658, PubMed:29138260, PubMed:29769312, PubMed:29967285). Binds to CDT1A. Interacts (via C-terminus) with PDV2 (via C-terminus) in the chloroplast intermembrane space; this interaction induces homodimerization and leads to the formation of a heterotetramer containing two ARC6 and two PDV2 subunits (PubMed:28248291). Interacts with MCD1 in the chloroplast stroma and facilitates its subsequent binding to FtsZ2-1 (PubMed:29967285). Interacts (via J domain) with CJD1 (via J-like domain) (PubMed:22028775).</text>
</comment>
<comment type="interaction">
    <interactant intactId="EBI-2000800">
        <id>Q9FIG9</id>
    </interactant>
    <interactant intactId="EBI-2131124">
        <id>Q42545</id>
        <label>FTSZ1</label>
    </interactant>
    <organismsDiffer>false</organismsDiffer>
    <experiments>2</experiments>
</comment>
<comment type="interaction">
    <interactant intactId="EBI-2000800">
        <id>Q9FIG9</id>
    </interactant>
    <interactant intactId="EBI-2000823">
        <id>Q9XII1</id>
        <label>PDV2</label>
    </interactant>
    <organismsDiffer>false</organismsDiffer>
    <experiments>3</experiments>
</comment>
<comment type="subcellular location">
    <subcellularLocation>
        <location evidence="6 7 11">Plastid</location>
        <location evidence="6 7 11">Chloroplast inner membrane</location>
        <topology evidence="6 7 11">Single-pass membrane protein</topology>
    </subcellularLocation>
    <text evidence="11 19">Localized to a ring at the center of the chloroplasts (equatorial positioning) prior to and during constriction.</text>
</comment>
<comment type="tissue specificity">
    <text evidence="18">Mostly expressed in young leaves.</text>
</comment>
<comment type="developmental stage">
    <text evidence="18">Levels decrease slightly from young developing leaves to mature ones (at protein level).</text>
</comment>
<comment type="induction">
    <text evidence="16">Slightly induced by gibberellic acid (GA).</text>
</comment>
<comment type="disruption phenotype">
    <text evidence="3 4 5 6 10 12 14 21 23 24 25 26">Defective in proplastid and plastid division, with only one or two grossly enlarged plastids per cell, sometimes exhibiting alteration in stromule length and frequency in non-green tissues (e.g. increase in the frequency of stromules in nearly all cells) and in stomatal guard cells (GCs) (PubMed:29466386). Heterogeneous chloroplasts sizes and shapes such as giant and mini-plastids in leaf epidermal pavement cells (PCs) (PubMed:29466386). Abnormal subplastidial localization of the key plastid division proteins FTSZ1 and FTSZ2 (numerous short and disorganized FtsZ filament fragments) (PubMed:29967285). Root cells statoliths, chloroplasts, and other plastids are also abnormally large. Impaired gravitropism of inflorescence stems and hypocotyls, but not of roots. Several mesophyll and stomatal guard cells contain chlorophyll-free plastids, probably missing chloroplastic DNA. Misexpression and mislocalization of ADT2 (PubMed:30252596). The double mutant mcd1 arc6 exhibits similar chloroplast defect than the single mutant arc6, including the abnormal localization of FTSZ1 to short filaments and dots within chloroplasts (PubMed:29967285). The double mutant arc6 cjd1 exhibits both phenotypes of single mutants cjd1 and arc6 including altered fatty acid profiles and heterogeneous chloroplasts sizes and shapes, respectively (PubMed:22028775).</text>
</comment>
<organism>
    <name type="scientific">Arabidopsis thaliana</name>
    <name type="common">Mouse-ear cress</name>
    <dbReference type="NCBI Taxonomy" id="3702"/>
    <lineage>
        <taxon>Eukaryota</taxon>
        <taxon>Viridiplantae</taxon>
        <taxon>Streptophyta</taxon>
        <taxon>Embryophyta</taxon>
        <taxon>Tracheophyta</taxon>
        <taxon>Spermatophyta</taxon>
        <taxon>Magnoliopsida</taxon>
        <taxon>eudicotyledons</taxon>
        <taxon>Gunneridae</taxon>
        <taxon>Pentapetalae</taxon>
        <taxon>rosids</taxon>
        <taxon>malvids</taxon>
        <taxon>Brassicales</taxon>
        <taxon>Brassicaceae</taxon>
        <taxon>Camelineae</taxon>
        <taxon>Arabidopsis</taxon>
    </lineage>
</organism>
<name>ARC6_ARATH</name>
<accession>Q9FIG9</accession>
<accession>Q7XAR9</accession>
<accession>Q7XAS0</accession>
<accession>Q7XAS1</accession>